<dbReference type="EC" id="1.6.1.1" evidence="1"/>
<dbReference type="EMBL" id="CP000653">
    <property type="protein sequence ID" value="ABP62679.1"/>
    <property type="molecule type" value="Genomic_DNA"/>
</dbReference>
<dbReference type="RefSeq" id="WP_015960983.1">
    <property type="nucleotide sequence ID" value="NC_009436.1"/>
</dbReference>
<dbReference type="SMR" id="A4WG49"/>
<dbReference type="STRING" id="399742.Ent638_4024"/>
<dbReference type="KEGG" id="ent:Ent638_4024"/>
<dbReference type="eggNOG" id="COG1249">
    <property type="taxonomic scope" value="Bacteria"/>
</dbReference>
<dbReference type="HOGENOM" id="CLU_016755_0_0_6"/>
<dbReference type="OrthoDB" id="9800167at2"/>
<dbReference type="Proteomes" id="UP000000230">
    <property type="component" value="Chromosome"/>
</dbReference>
<dbReference type="GO" id="GO:0005829">
    <property type="term" value="C:cytosol"/>
    <property type="evidence" value="ECO:0007669"/>
    <property type="project" value="TreeGrafter"/>
</dbReference>
<dbReference type="GO" id="GO:0004148">
    <property type="term" value="F:dihydrolipoyl dehydrogenase (NADH) activity"/>
    <property type="evidence" value="ECO:0007669"/>
    <property type="project" value="TreeGrafter"/>
</dbReference>
<dbReference type="GO" id="GO:0050660">
    <property type="term" value="F:flavin adenine dinucleotide binding"/>
    <property type="evidence" value="ECO:0007669"/>
    <property type="project" value="TreeGrafter"/>
</dbReference>
<dbReference type="GO" id="GO:0003957">
    <property type="term" value="F:NAD(P)+ transhydrogenase (Si-specific) activity"/>
    <property type="evidence" value="ECO:0007669"/>
    <property type="project" value="UniProtKB-UniRule"/>
</dbReference>
<dbReference type="GO" id="GO:0006103">
    <property type="term" value="P:2-oxoglutarate metabolic process"/>
    <property type="evidence" value="ECO:0007669"/>
    <property type="project" value="TreeGrafter"/>
</dbReference>
<dbReference type="GO" id="GO:0006739">
    <property type="term" value="P:NADP metabolic process"/>
    <property type="evidence" value="ECO:0007669"/>
    <property type="project" value="UniProtKB-UniRule"/>
</dbReference>
<dbReference type="FunFam" id="3.30.390.30:FF:000002">
    <property type="entry name" value="Soluble pyridine nucleotide transhydrogenase"/>
    <property type="match status" value="1"/>
</dbReference>
<dbReference type="FunFam" id="3.50.50.60:FF:000008">
    <property type="entry name" value="Soluble pyridine nucleotide transhydrogenase"/>
    <property type="match status" value="1"/>
</dbReference>
<dbReference type="Gene3D" id="3.30.390.30">
    <property type="match status" value="1"/>
</dbReference>
<dbReference type="Gene3D" id="3.50.50.60">
    <property type="entry name" value="FAD/NAD(P)-binding domain"/>
    <property type="match status" value="2"/>
</dbReference>
<dbReference type="HAMAP" id="MF_00247">
    <property type="entry name" value="SthA"/>
    <property type="match status" value="1"/>
</dbReference>
<dbReference type="InterPro" id="IPR050151">
    <property type="entry name" value="Class-I_Pyr_Nuc-Dis_Oxidored"/>
</dbReference>
<dbReference type="InterPro" id="IPR036188">
    <property type="entry name" value="FAD/NAD-bd_sf"/>
</dbReference>
<dbReference type="InterPro" id="IPR023753">
    <property type="entry name" value="FAD/NAD-binding_dom"/>
</dbReference>
<dbReference type="InterPro" id="IPR016156">
    <property type="entry name" value="FAD/NAD-linked_Rdtase_dimer_sf"/>
</dbReference>
<dbReference type="InterPro" id="IPR001100">
    <property type="entry name" value="Pyr_nuc-diS_OxRdtase"/>
</dbReference>
<dbReference type="InterPro" id="IPR004099">
    <property type="entry name" value="Pyr_nucl-diS_OxRdtase_dimer"/>
</dbReference>
<dbReference type="InterPro" id="IPR022962">
    <property type="entry name" value="STH_gammaproteobact"/>
</dbReference>
<dbReference type="NCBIfam" id="NF003585">
    <property type="entry name" value="PRK05249.1"/>
    <property type="match status" value="1"/>
</dbReference>
<dbReference type="PANTHER" id="PTHR22912">
    <property type="entry name" value="DISULFIDE OXIDOREDUCTASE"/>
    <property type="match status" value="1"/>
</dbReference>
<dbReference type="PANTHER" id="PTHR22912:SF93">
    <property type="entry name" value="SOLUBLE PYRIDINE NUCLEOTIDE TRANSHYDROGENASE"/>
    <property type="match status" value="1"/>
</dbReference>
<dbReference type="Pfam" id="PF07992">
    <property type="entry name" value="Pyr_redox_2"/>
    <property type="match status" value="1"/>
</dbReference>
<dbReference type="Pfam" id="PF02852">
    <property type="entry name" value="Pyr_redox_dim"/>
    <property type="match status" value="1"/>
</dbReference>
<dbReference type="PIRSF" id="PIRSF000350">
    <property type="entry name" value="Mercury_reductase_MerA"/>
    <property type="match status" value="1"/>
</dbReference>
<dbReference type="PRINTS" id="PR00368">
    <property type="entry name" value="FADPNR"/>
</dbReference>
<dbReference type="PRINTS" id="PR00411">
    <property type="entry name" value="PNDRDTASEI"/>
</dbReference>
<dbReference type="SUPFAM" id="SSF51905">
    <property type="entry name" value="FAD/NAD(P)-binding domain"/>
    <property type="match status" value="1"/>
</dbReference>
<dbReference type="SUPFAM" id="SSF55424">
    <property type="entry name" value="FAD/NAD-linked reductases, dimerisation (C-terminal) domain"/>
    <property type="match status" value="1"/>
</dbReference>
<reference key="1">
    <citation type="journal article" date="2010" name="PLoS Genet.">
        <title>Genome sequence of the plant growth promoting endophytic bacterium Enterobacter sp. 638.</title>
        <authorList>
            <person name="Taghavi S."/>
            <person name="van der Lelie D."/>
            <person name="Hoffman A."/>
            <person name="Zhang Y.B."/>
            <person name="Walla M.D."/>
            <person name="Vangronsveld J."/>
            <person name="Newman L."/>
            <person name="Monchy S."/>
        </authorList>
    </citation>
    <scope>NUCLEOTIDE SEQUENCE [LARGE SCALE GENOMIC DNA]</scope>
    <source>
        <strain>638</strain>
    </source>
</reference>
<comment type="function">
    <text evidence="1">Conversion of NADPH, generated by peripheral catabolic pathways, to NADH, which can enter the respiratory chain for energy generation.</text>
</comment>
<comment type="catalytic activity">
    <reaction evidence="1">
        <text>NAD(+) + NADPH = NADH + NADP(+)</text>
        <dbReference type="Rhea" id="RHEA:11692"/>
        <dbReference type="ChEBI" id="CHEBI:57540"/>
        <dbReference type="ChEBI" id="CHEBI:57783"/>
        <dbReference type="ChEBI" id="CHEBI:57945"/>
        <dbReference type="ChEBI" id="CHEBI:58349"/>
        <dbReference type="EC" id="1.6.1.1"/>
    </reaction>
</comment>
<comment type="cofactor">
    <cofactor evidence="1">
        <name>FAD</name>
        <dbReference type="ChEBI" id="CHEBI:57692"/>
    </cofactor>
    <text evidence="1">Binds 1 FAD per subunit.</text>
</comment>
<comment type="subcellular location">
    <subcellularLocation>
        <location evidence="1">Cytoplasm</location>
    </subcellularLocation>
</comment>
<comment type="similarity">
    <text evidence="1">Belongs to the class-I pyridine nucleotide-disulfide oxidoreductase family.</text>
</comment>
<evidence type="ECO:0000255" key="1">
    <source>
        <dbReference type="HAMAP-Rule" id="MF_00247"/>
    </source>
</evidence>
<accession>A4WG49</accession>
<protein>
    <recommendedName>
        <fullName evidence="1">Soluble pyridine nucleotide transhydrogenase</fullName>
        <shortName evidence="1">STH</shortName>
        <ecNumber evidence="1">1.6.1.1</ecNumber>
    </recommendedName>
    <alternativeName>
        <fullName evidence="1">NAD(P)(+) transhydrogenase [B-specific]</fullName>
    </alternativeName>
</protein>
<feature type="chain" id="PRO_1000059010" description="Soluble pyridine nucleotide transhydrogenase">
    <location>
        <begin position="1"/>
        <end position="466"/>
    </location>
</feature>
<feature type="binding site" evidence="1">
    <location>
        <begin position="36"/>
        <end position="45"/>
    </location>
    <ligand>
        <name>FAD</name>
        <dbReference type="ChEBI" id="CHEBI:57692"/>
    </ligand>
</feature>
<name>STHA_ENT38</name>
<organism>
    <name type="scientific">Enterobacter sp. (strain 638)</name>
    <dbReference type="NCBI Taxonomy" id="399742"/>
    <lineage>
        <taxon>Bacteria</taxon>
        <taxon>Pseudomonadati</taxon>
        <taxon>Pseudomonadota</taxon>
        <taxon>Gammaproteobacteria</taxon>
        <taxon>Enterobacterales</taxon>
        <taxon>Enterobacteriaceae</taxon>
        <taxon>Enterobacter</taxon>
    </lineage>
</organism>
<proteinExistence type="inferred from homology"/>
<keyword id="KW-0963">Cytoplasm</keyword>
<keyword id="KW-0274">FAD</keyword>
<keyword id="KW-0285">Flavoprotein</keyword>
<keyword id="KW-0520">NAD</keyword>
<keyword id="KW-0521">NADP</keyword>
<keyword id="KW-0560">Oxidoreductase</keyword>
<gene>
    <name evidence="1" type="primary">sthA</name>
    <name evidence="1" type="synonym">udhA</name>
    <name type="ordered locus">Ent638_4024</name>
</gene>
<sequence length="466" mass="51566">MSHSYDYDAIVIGSGPGGEGAAMGLVKQGARVAVIERYHNVGGGCTHWGTIPSKALRHAVSRIIEFNQNPLYSDHSRLLRSSFADILNHADTVINQQTRMRQGFYERNHCEILQGDAHFVDEHTLALKCHDGSVETITAEKFVIACGSRPYHPDDVDFSHPRVYDSDSILSLHHEPRHVLIYGAGVIGCEYASIFRGMEVKVDLINTRDRLLAFLDQEMSDSLSYHFWNSGVVIRHNEEYERIEACDDGVIMHLKSGKKLKADCLLYANGRTGNTDSLALENIGLTTDSRGQLKVNSMYQTALPHIYAVGDVIGYPSLASAAYDQGRIAAQALVKGEATAHLIEDIPTGIYTIPEISSVGKTEQQLTSMKVPYEVGRAQFKHLARAQIVGMSVGTLKILFHRETKEILGIHCFGERAAEIIHIGQAIMEQKGGGNTIEYFVNTTFNYPTMAEAYRVAALNGLNRLF</sequence>